<sequence>MGRRYFGTDGIRGKVGDAPITPDFVLRLGYAAGKVLASAPGRAASGARPTVLIGKDTRVSGYMLEAALEAGFSAAGVDVMLAGPMPTPGVAYLTRALRLSAGVVISASHNPYHDNGIKFFSADGNKLPDEIEAEIEAWLDKPLDCAASDGLGKARRLDDAAGRYIEFCKSTFPAAFDLRGMKLVVDCAHGAAYQVAPHVFHELGADVIPIGVAPNGFNINDGVGATAPDALMRAVRANHADLGIALDGDADRLLVVDHTGRLYNGDELLYVLVKDRIATNGQVEGAVGTLMTNFAVEVALKEAGVQFVRAAVGDRYVLEQLRERGWQLGAEGSGHILSLDRHSTGDGIVSALLVLAALKRSGKTLAQMLEGVTLFPQKLINVRMKPGADWKGSEAIRRAIDSAEQALSGSGRVLIRASGTEPVLRVMVEARQATDANRHAEAIADAVKQATA</sequence>
<proteinExistence type="inferred from homology"/>
<comment type="function">
    <text evidence="1">Catalyzes the conversion of glucosamine-6-phosphate to glucosamine-1-phosphate.</text>
</comment>
<comment type="catalytic activity">
    <reaction evidence="1">
        <text>alpha-D-glucosamine 1-phosphate = D-glucosamine 6-phosphate</text>
        <dbReference type="Rhea" id="RHEA:23424"/>
        <dbReference type="ChEBI" id="CHEBI:58516"/>
        <dbReference type="ChEBI" id="CHEBI:58725"/>
        <dbReference type="EC" id="5.4.2.10"/>
    </reaction>
</comment>
<comment type="cofactor">
    <cofactor evidence="1">
        <name>Mg(2+)</name>
        <dbReference type="ChEBI" id="CHEBI:18420"/>
    </cofactor>
    <text evidence="1">Binds 1 Mg(2+) ion per subunit.</text>
</comment>
<comment type="PTM">
    <text evidence="1">Activated by phosphorylation.</text>
</comment>
<comment type="similarity">
    <text evidence="1">Belongs to the phosphohexose mutase family.</text>
</comment>
<protein>
    <recommendedName>
        <fullName evidence="1">Phosphoglucosamine mutase</fullName>
        <ecNumber evidence="1">5.4.2.10</ecNumber>
    </recommendedName>
</protein>
<name>GLMM_BURMA</name>
<gene>
    <name evidence="1" type="primary">glmM</name>
    <name type="ordered locus">BMA0779</name>
</gene>
<dbReference type="EC" id="5.4.2.10" evidence="1"/>
<dbReference type="EMBL" id="CP000010">
    <property type="protein sequence ID" value="AAU49559.1"/>
    <property type="molecule type" value="Genomic_DNA"/>
</dbReference>
<dbReference type="RefSeq" id="WP_004266863.1">
    <property type="nucleotide sequence ID" value="NC_006348.1"/>
</dbReference>
<dbReference type="RefSeq" id="YP_102542.1">
    <property type="nucleotide sequence ID" value="NC_006348.1"/>
</dbReference>
<dbReference type="SMR" id="Q62L77"/>
<dbReference type="GeneID" id="93059857"/>
<dbReference type="KEGG" id="bma:BMA0779"/>
<dbReference type="PATRIC" id="fig|243160.12.peg.802"/>
<dbReference type="eggNOG" id="COG1109">
    <property type="taxonomic scope" value="Bacteria"/>
</dbReference>
<dbReference type="HOGENOM" id="CLU_016950_7_0_4"/>
<dbReference type="Proteomes" id="UP000006693">
    <property type="component" value="Chromosome 1"/>
</dbReference>
<dbReference type="GO" id="GO:0005829">
    <property type="term" value="C:cytosol"/>
    <property type="evidence" value="ECO:0007669"/>
    <property type="project" value="TreeGrafter"/>
</dbReference>
<dbReference type="GO" id="GO:0000287">
    <property type="term" value="F:magnesium ion binding"/>
    <property type="evidence" value="ECO:0007669"/>
    <property type="project" value="UniProtKB-UniRule"/>
</dbReference>
<dbReference type="GO" id="GO:0008966">
    <property type="term" value="F:phosphoglucosamine mutase activity"/>
    <property type="evidence" value="ECO:0007669"/>
    <property type="project" value="UniProtKB-UniRule"/>
</dbReference>
<dbReference type="GO" id="GO:0004615">
    <property type="term" value="F:phosphomannomutase activity"/>
    <property type="evidence" value="ECO:0007669"/>
    <property type="project" value="TreeGrafter"/>
</dbReference>
<dbReference type="GO" id="GO:0005975">
    <property type="term" value="P:carbohydrate metabolic process"/>
    <property type="evidence" value="ECO:0007669"/>
    <property type="project" value="InterPro"/>
</dbReference>
<dbReference type="GO" id="GO:0009252">
    <property type="term" value="P:peptidoglycan biosynthetic process"/>
    <property type="evidence" value="ECO:0007669"/>
    <property type="project" value="TreeGrafter"/>
</dbReference>
<dbReference type="GO" id="GO:0006048">
    <property type="term" value="P:UDP-N-acetylglucosamine biosynthetic process"/>
    <property type="evidence" value="ECO:0007669"/>
    <property type="project" value="TreeGrafter"/>
</dbReference>
<dbReference type="CDD" id="cd05802">
    <property type="entry name" value="GlmM"/>
    <property type="match status" value="1"/>
</dbReference>
<dbReference type="FunFam" id="3.30.310.50:FF:000001">
    <property type="entry name" value="Phosphoglucosamine mutase"/>
    <property type="match status" value="1"/>
</dbReference>
<dbReference type="FunFam" id="3.40.120.10:FF:000001">
    <property type="entry name" value="Phosphoglucosamine mutase"/>
    <property type="match status" value="1"/>
</dbReference>
<dbReference type="FunFam" id="3.40.120.10:FF:000003">
    <property type="entry name" value="Phosphoglucosamine mutase"/>
    <property type="match status" value="1"/>
</dbReference>
<dbReference type="Gene3D" id="3.40.120.10">
    <property type="entry name" value="Alpha-D-Glucose-1,6-Bisphosphate, subunit A, domain 3"/>
    <property type="match status" value="3"/>
</dbReference>
<dbReference type="Gene3D" id="3.30.310.50">
    <property type="entry name" value="Alpha-D-phosphohexomutase, C-terminal domain"/>
    <property type="match status" value="1"/>
</dbReference>
<dbReference type="HAMAP" id="MF_01554_B">
    <property type="entry name" value="GlmM_B"/>
    <property type="match status" value="1"/>
</dbReference>
<dbReference type="InterPro" id="IPR005844">
    <property type="entry name" value="A-D-PHexomutase_a/b/a-I"/>
</dbReference>
<dbReference type="InterPro" id="IPR016055">
    <property type="entry name" value="A-D-PHexomutase_a/b/a-I/II/III"/>
</dbReference>
<dbReference type="InterPro" id="IPR005845">
    <property type="entry name" value="A-D-PHexomutase_a/b/a-II"/>
</dbReference>
<dbReference type="InterPro" id="IPR005846">
    <property type="entry name" value="A-D-PHexomutase_a/b/a-III"/>
</dbReference>
<dbReference type="InterPro" id="IPR005843">
    <property type="entry name" value="A-D-PHexomutase_C"/>
</dbReference>
<dbReference type="InterPro" id="IPR036900">
    <property type="entry name" value="A-D-PHexomutase_C_sf"/>
</dbReference>
<dbReference type="InterPro" id="IPR016066">
    <property type="entry name" value="A-D-PHexomutase_CS"/>
</dbReference>
<dbReference type="InterPro" id="IPR005841">
    <property type="entry name" value="Alpha-D-phosphohexomutase_SF"/>
</dbReference>
<dbReference type="InterPro" id="IPR006352">
    <property type="entry name" value="GlmM_bact"/>
</dbReference>
<dbReference type="InterPro" id="IPR050060">
    <property type="entry name" value="Phosphoglucosamine_mutase"/>
</dbReference>
<dbReference type="NCBIfam" id="TIGR01455">
    <property type="entry name" value="glmM"/>
    <property type="match status" value="1"/>
</dbReference>
<dbReference type="NCBIfam" id="NF008139">
    <property type="entry name" value="PRK10887.1"/>
    <property type="match status" value="1"/>
</dbReference>
<dbReference type="PANTHER" id="PTHR42946:SF1">
    <property type="entry name" value="PHOSPHOGLUCOMUTASE (ALPHA-D-GLUCOSE-1,6-BISPHOSPHATE-DEPENDENT)"/>
    <property type="match status" value="1"/>
</dbReference>
<dbReference type="PANTHER" id="PTHR42946">
    <property type="entry name" value="PHOSPHOHEXOSE MUTASE"/>
    <property type="match status" value="1"/>
</dbReference>
<dbReference type="Pfam" id="PF02878">
    <property type="entry name" value="PGM_PMM_I"/>
    <property type="match status" value="1"/>
</dbReference>
<dbReference type="Pfam" id="PF02879">
    <property type="entry name" value="PGM_PMM_II"/>
    <property type="match status" value="1"/>
</dbReference>
<dbReference type="Pfam" id="PF02880">
    <property type="entry name" value="PGM_PMM_III"/>
    <property type="match status" value="1"/>
</dbReference>
<dbReference type="Pfam" id="PF00408">
    <property type="entry name" value="PGM_PMM_IV"/>
    <property type="match status" value="1"/>
</dbReference>
<dbReference type="PRINTS" id="PR00509">
    <property type="entry name" value="PGMPMM"/>
</dbReference>
<dbReference type="SUPFAM" id="SSF55957">
    <property type="entry name" value="Phosphoglucomutase, C-terminal domain"/>
    <property type="match status" value="1"/>
</dbReference>
<dbReference type="SUPFAM" id="SSF53738">
    <property type="entry name" value="Phosphoglucomutase, first 3 domains"/>
    <property type="match status" value="3"/>
</dbReference>
<dbReference type="PROSITE" id="PS00710">
    <property type="entry name" value="PGM_PMM"/>
    <property type="match status" value="1"/>
</dbReference>
<feature type="chain" id="PRO_0000147862" description="Phosphoglucosamine mutase">
    <location>
        <begin position="1"/>
        <end position="452"/>
    </location>
</feature>
<feature type="active site" description="Phosphoserine intermediate" evidence="1">
    <location>
        <position position="108"/>
    </location>
</feature>
<feature type="binding site" description="via phosphate group" evidence="1">
    <location>
        <position position="108"/>
    </location>
    <ligand>
        <name>Mg(2+)</name>
        <dbReference type="ChEBI" id="CHEBI:18420"/>
    </ligand>
</feature>
<feature type="binding site" evidence="1">
    <location>
        <position position="247"/>
    </location>
    <ligand>
        <name>Mg(2+)</name>
        <dbReference type="ChEBI" id="CHEBI:18420"/>
    </ligand>
</feature>
<feature type="binding site" evidence="1">
    <location>
        <position position="249"/>
    </location>
    <ligand>
        <name>Mg(2+)</name>
        <dbReference type="ChEBI" id="CHEBI:18420"/>
    </ligand>
</feature>
<feature type="binding site" evidence="1">
    <location>
        <position position="251"/>
    </location>
    <ligand>
        <name>Mg(2+)</name>
        <dbReference type="ChEBI" id="CHEBI:18420"/>
    </ligand>
</feature>
<feature type="modified residue" description="Phosphoserine" evidence="1">
    <location>
        <position position="108"/>
    </location>
</feature>
<evidence type="ECO:0000255" key="1">
    <source>
        <dbReference type="HAMAP-Rule" id="MF_01554"/>
    </source>
</evidence>
<keyword id="KW-0413">Isomerase</keyword>
<keyword id="KW-0460">Magnesium</keyword>
<keyword id="KW-0479">Metal-binding</keyword>
<keyword id="KW-0597">Phosphoprotein</keyword>
<keyword id="KW-1185">Reference proteome</keyword>
<accession>Q62L77</accession>
<organism>
    <name type="scientific">Burkholderia mallei (strain ATCC 23344)</name>
    <dbReference type="NCBI Taxonomy" id="243160"/>
    <lineage>
        <taxon>Bacteria</taxon>
        <taxon>Pseudomonadati</taxon>
        <taxon>Pseudomonadota</taxon>
        <taxon>Betaproteobacteria</taxon>
        <taxon>Burkholderiales</taxon>
        <taxon>Burkholderiaceae</taxon>
        <taxon>Burkholderia</taxon>
        <taxon>pseudomallei group</taxon>
    </lineage>
</organism>
<reference key="1">
    <citation type="journal article" date="2004" name="Proc. Natl. Acad. Sci. U.S.A.">
        <title>Structural flexibility in the Burkholderia mallei genome.</title>
        <authorList>
            <person name="Nierman W.C."/>
            <person name="DeShazer D."/>
            <person name="Kim H.S."/>
            <person name="Tettelin H."/>
            <person name="Nelson K.E."/>
            <person name="Feldblyum T.V."/>
            <person name="Ulrich R.L."/>
            <person name="Ronning C.M."/>
            <person name="Brinkac L.M."/>
            <person name="Daugherty S.C."/>
            <person name="Davidsen T.D."/>
            <person name="DeBoy R.T."/>
            <person name="Dimitrov G."/>
            <person name="Dodson R.J."/>
            <person name="Durkin A.S."/>
            <person name="Gwinn M.L."/>
            <person name="Haft D.H."/>
            <person name="Khouri H.M."/>
            <person name="Kolonay J.F."/>
            <person name="Madupu R."/>
            <person name="Mohammoud Y."/>
            <person name="Nelson W.C."/>
            <person name="Radune D."/>
            <person name="Romero C.M."/>
            <person name="Sarria S."/>
            <person name="Selengut J."/>
            <person name="Shamblin C."/>
            <person name="Sullivan S.A."/>
            <person name="White O."/>
            <person name="Yu Y."/>
            <person name="Zafar N."/>
            <person name="Zhou L."/>
            <person name="Fraser C.M."/>
        </authorList>
    </citation>
    <scope>NUCLEOTIDE SEQUENCE [LARGE SCALE GENOMIC DNA]</scope>
    <source>
        <strain>ATCC 23344</strain>
    </source>
</reference>